<organism>
    <name type="scientific">Coxiella burnetii (strain CbuG_Q212)</name>
    <name type="common">Coxiella burnetii (strain Q212)</name>
    <dbReference type="NCBI Taxonomy" id="434923"/>
    <lineage>
        <taxon>Bacteria</taxon>
        <taxon>Pseudomonadati</taxon>
        <taxon>Pseudomonadota</taxon>
        <taxon>Gammaproteobacteria</taxon>
        <taxon>Legionellales</taxon>
        <taxon>Coxiellaceae</taxon>
        <taxon>Coxiella</taxon>
    </lineage>
</organism>
<dbReference type="EC" id="2.8.1.8" evidence="1"/>
<dbReference type="EMBL" id="CP001019">
    <property type="protein sequence ID" value="ACJ18142.1"/>
    <property type="molecule type" value="Genomic_DNA"/>
</dbReference>
<dbReference type="RefSeq" id="WP_010958112.1">
    <property type="nucleotide sequence ID" value="NC_011527.1"/>
</dbReference>
<dbReference type="SMR" id="B6IZL4"/>
<dbReference type="KEGG" id="cbg:CbuG_0745"/>
<dbReference type="HOGENOM" id="CLU_033144_2_1_6"/>
<dbReference type="UniPathway" id="UPA00538">
    <property type="reaction ID" value="UER00593"/>
</dbReference>
<dbReference type="GO" id="GO:0005737">
    <property type="term" value="C:cytoplasm"/>
    <property type="evidence" value="ECO:0007669"/>
    <property type="project" value="UniProtKB-SubCell"/>
</dbReference>
<dbReference type="GO" id="GO:0051539">
    <property type="term" value="F:4 iron, 4 sulfur cluster binding"/>
    <property type="evidence" value="ECO:0007669"/>
    <property type="project" value="UniProtKB-UniRule"/>
</dbReference>
<dbReference type="GO" id="GO:0016992">
    <property type="term" value="F:lipoate synthase activity"/>
    <property type="evidence" value="ECO:0007669"/>
    <property type="project" value="UniProtKB-UniRule"/>
</dbReference>
<dbReference type="GO" id="GO:0046872">
    <property type="term" value="F:metal ion binding"/>
    <property type="evidence" value="ECO:0007669"/>
    <property type="project" value="UniProtKB-KW"/>
</dbReference>
<dbReference type="CDD" id="cd01335">
    <property type="entry name" value="Radical_SAM"/>
    <property type="match status" value="1"/>
</dbReference>
<dbReference type="FunFam" id="3.20.20.70:FF:000040">
    <property type="entry name" value="Lipoyl synthase"/>
    <property type="match status" value="1"/>
</dbReference>
<dbReference type="Gene3D" id="3.20.20.70">
    <property type="entry name" value="Aldolase class I"/>
    <property type="match status" value="1"/>
</dbReference>
<dbReference type="HAMAP" id="MF_00206">
    <property type="entry name" value="Lipoyl_synth"/>
    <property type="match status" value="1"/>
</dbReference>
<dbReference type="InterPro" id="IPR013785">
    <property type="entry name" value="Aldolase_TIM"/>
</dbReference>
<dbReference type="InterPro" id="IPR006638">
    <property type="entry name" value="Elp3/MiaA/NifB-like_rSAM"/>
</dbReference>
<dbReference type="InterPro" id="IPR003698">
    <property type="entry name" value="Lipoyl_synth"/>
</dbReference>
<dbReference type="InterPro" id="IPR007197">
    <property type="entry name" value="rSAM"/>
</dbReference>
<dbReference type="NCBIfam" id="TIGR00510">
    <property type="entry name" value="lipA"/>
    <property type="match status" value="1"/>
</dbReference>
<dbReference type="NCBIfam" id="NF004019">
    <property type="entry name" value="PRK05481.1"/>
    <property type="match status" value="1"/>
</dbReference>
<dbReference type="NCBIfam" id="NF009544">
    <property type="entry name" value="PRK12928.1"/>
    <property type="match status" value="1"/>
</dbReference>
<dbReference type="PANTHER" id="PTHR10949">
    <property type="entry name" value="LIPOYL SYNTHASE"/>
    <property type="match status" value="1"/>
</dbReference>
<dbReference type="PANTHER" id="PTHR10949:SF0">
    <property type="entry name" value="LIPOYL SYNTHASE, MITOCHONDRIAL"/>
    <property type="match status" value="1"/>
</dbReference>
<dbReference type="Pfam" id="PF04055">
    <property type="entry name" value="Radical_SAM"/>
    <property type="match status" value="1"/>
</dbReference>
<dbReference type="PIRSF" id="PIRSF005963">
    <property type="entry name" value="Lipoyl_synth"/>
    <property type="match status" value="1"/>
</dbReference>
<dbReference type="SFLD" id="SFLDF00271">
    <property type="entry name" value="lipoyl_synthase"/>
    <property type="match status" value="1"/>
</dbReference>
<dbReference type="SFLD" id="SFLDS00029">
    <property type="entry name" value="Radical_SAM"/>
    <property type="match status" value="1"/>
</dbReference>
<dbReference type="SMART" id="SM00729">
    <property type="entry name" value="Elp3"/>
    <property type="match status" value="1"/>
</dbReference>
<dbReference type="SUPFAM" id="SSF102114">
    <property type="entry name" value="Radical SAM enzymes"/>
    <property type="match status" value="1"/>
</dbReference>
<dbReference type="PROSITE" id="PS51918">
    <property type="entry name" value="RADICAL_SAM"/>
    <property type="match status" value="1"/>
</dbReference>
<feature type="chain" id="PRO_1000099598" description="Lipoyl synthase">
    <location>
        <begin position="1"/>
        <end position="315"/>
    </location>
</feature>
<feature type="domain" description="Radical SAM core" evidence="2">
    <location>
        <begin position="73"/>
        <end position="291"/>
    </location>
</feature>
<feature type="binding site" evidence="1">
    <location>
        <position position="62"/>
    </location>
    <ligand>
        <name>[4Fe-4S] cluster</name>
        <dbReference type="ChEBI" id="CHEBI:49883"/>
        <label>1</label>
    </ligand>
</feature>
<feature type="binding site" evidence="1">
    <location>
        <position position="67"/>
    </location>
    <ligand>
        <name>[4Fe-4S] cluster</name>
        <dbReference type="ChEBI" id="CHEBI:49883"/>
        <label>1</label>
    </ligand>
</feature>
<feature type="binding site" evidence="1">
    <location>
        <position position="73"/>
    </location>
    <ligand>
        <name>[4Fe-4S] cluster</name>
        <dbReference type="ChEBI" id="CHEBI:49883"/>
        <label>1</label>
    </ligand>
</feature>
<feature type="binding site" evidence="1">
    <location>
        <position position="88"/>
    </location>
    <ligand>
        <name>[4Fe-4S] cluster</name>
        <dbReference type="ChEBI" id="CHEBI:49883"/>
        <label>2</label>
        <note>4Fe-4S-S-AdoMet</note>
    </ligand>
</feature>
<feature type="binding site" evidence="1">
    <location>
        <position position="92"/>
    </location>
    <ligand>
        <name>[4Fe-4S] cluster</name>
        <dbReference type="ChEBI" id="CHEBI:49883"/>
        <label>2</label>
        <note>4Fe-4S-S-AdoMet</note>
    </ligand>
</feature>
<feature type="binding site" evidence="1">
    <location>
        <position position="95"/>
    </location>
    <ligand>
        <name>[4Fe-4S] cluster</name>
        <dbReference type="ChEBI" id="CHEBI:49883"/>
        <label>2</label>
        <note>4Fe-4S-S-AdoMet</note>
    </ligand>
</feature>
<feature type="binding site" evidence="1">
    <location>
        <position position="302"/>
    </location>
    <ligand>
        <name>[4Fe-4S] cluster</name>
        <dbReference type="ChEBI" id="CHEBI:49883"/>
        <label>1</label>
    </ligand>
</feature>
<sequence length="315" mass="35604">MTTYDPSQKSLGKEKLSRIPVKIEATHTPLRKPDWIRIRLSTDSKVSQLKKLLRENHLVTVCEEASCPNLNECFGHGTATFMIMGDKCTRRCSFCDVGHGRPDPLDPEEPVNLANTVSIMSLRYVVITSVDRDDLRDGGAQHYAQCINAVREKNPGIKVEVLVPDFRGRMEKALDQLAQGLPDVFNHNIETAPRLYKQARPGADYPWSLALLQTFKKRFPGIPTKSGMMLGLGETREEVEMVMRDLRQHEVDRLTLGQYLQPTRYHMPVDRYVTPQEFQELGELAKKLGFSNVASGPLVRSSYHADLQAQGERVS</sequence>
<protein>
    <recommendedName>
        <fullName evidence="1">Lipoyl synthase</fullName>
        <ecNumber evidence="1">2.8.1.8</ecNumber>
    </recommendedName>
    <alternativeName>
        <fullName evidence="1">Lip-syn</fullName>
        <shortName evidence="1">LS</shortName>
    </alternativeName>
    <alternativeName>
        <fullName evidence="1">Lipoate synthase</fullName>
    </alternativeName>
    <alternativeName>
        <fullName evidence="1">Lipoic acid synthase</fullName>
    </alternativeName>
    <alternativeName>
        <fullName evidence="1">Sulfur insertion protein LipA</fullName>
    </alternativeName>
</protein>
<gene>
    <name evidence="1" type="primary">lipA</name>
    <name type="ordered locus">CbuG_0745</name>
</gene>
<reference key="1">
    <citation type="journal article" date="2009" name="Infect. Immun.">
        <title>Comparative genomics reveal extensive transposon-mediated genomic plasticity and diversity among potential effector proteins within the genus Coxiella.</title>
        <authorList>
            <person name="Beare P.A."/>
            <person name="Unsworth N."/>
            <person name="Andoh M."/>
            <person name="Voth D.E."/>
            <person name="Omsland A."/>
            <person name="Gilk S.D."/>
            <person name="Williams K.P."/>
            <person name="Sobral B.W."/>
            <person name="Kupko J.J. III"/>
            <person name="Porcella S.F."/>
            <person name="Samuel J.E."/>
            <person name="Heinzen R.A."/>
        </authorList>
    </citation>
    <scope>NUCLEOTIDE SEQUENCE [LARGE SCALE GENOMIC DNA]</scope>
    <source>
        <strain>CbuG_Q212</strain>
    </source>
</reference>
<comment type="function">
    <text evidence="1">Catalyzes the radical-mediated insertion of two sulfur atoms into the C-6 and C-8 positions of the octanoyl moiety bound to the lipoyl domains of lipoate-dependent enzymes, thereby converting the octanoylated domains into lipoylated derivatives.</text>
</comment>
<comment type="catalytic activity">
    <reaction evidence="1">
        <text>[[Fe-S] cluster scaffold protein carrying a second [4Fe-4S](2+) cluster] + N(6)-octanoyl-L-lysyl-[protein] + 2 oxidized [2Fe-2S]-[ferredoxin] + 2 S-adenosyl-L-methionine + 4 H(+) = [[Fe-S] cluster scaffold protein] + N(6)-[(R)-dihydrolipoyl]-L-lysyl-[protein] + 4 Fe(3+) + 2 hydrogen sulfide + 2 5'-deoxyadenosine + 2 L-methionine + 2 reduced [2Fe-2S]-[ferredoxin]</text>
        <dbReference type="Rhea" id="RHEA:16585"/>
        <dbReference type="Rhea" id="RHEA-COMP:9928"/>
        <dbReference type="Rhea" id="RHEA-COMP:10000"/>
        <dbReference type="Rhea" id="RHEA-COMP:10001"/>
        <dbReference type="Rhea" id="RHEA-COMP:10475"/>
        <dbReference type="Rhea" id="RHEA-COMP:14568"/>
        <dbReference type="Rhea" id="RHEA-COMP:14569"/>
        <dbReference type="ChEBI" id="CHEBI:15378"/>
        <dbReference type="ChEBI" id="CHEBI:17319"/>
        <dbReference type="ChEBI" id="CHEBI:29034"/>
        <dbReference type="ChEBI" id="CHEBI:29919"/>
        <dbReference type="ChEBI" id="CHEBI:33722"/>
        <dbReference type="ChEBI" id="CHEBI:33737"/>
        <dbReference type="ChEBI" id="CHEBI:33738"/>
        <dbReference type="ChEBI" id="CHEBI:57844"/>
        <dbReference type="ChEBI" id="CHEBI:59789"/>
        <dbReference type="ChEBI" id="CHEBI:78809"/>
        <dbReference type="ChEBI" id="CHEBI:83100"/>
        <dbReference type="EC" id="2.8.1.8"/>
    </reaction>
</comment>
<comment type="cofactor">
    <cofactor evidence="1">
        <name>[4Fe-4S] cluster</name>
        <dbReference type="ChEBI" id="CHEBI:49883"/>
    </cofactor>
    <text evidence="1">Binds 2 [4Fe-4S] clusters per subunit. One cluster is coordinated with 3 cysteines and an exchangeable S-adenosyl-L-methionine.</text>
</comment>
<comment type="pathway">
    <text evidence="1">Protein modification; protein lipoylation via endogenous pathway; protein N(6)-(lipoyl)lysine from octanoyl-[acyl-carrier-protein]: step 2/2.</text>
</comment>
<comment type="subcellular location">
    <subcellularLocation>
        <location evidence="1">Cytoplasm</location>
    </subcellularLocation>
</comment>
<comment type="similarity">
    <text evidence="1">Belongs to the radical SAM superfamily. Lipoyl synthase family.</text>
</comment>
<proteinExistence type="inferred from homology"/>
<name>LIPA_COXB2</name>
<keyword id="KW-0004">4Fe-4S</keyword>
<keyword id="KW-0963">Cytoplasm</keyword>
<keyword id="KW-0408">Iron</keyword>
<keyword id="KW-0411">Iron-sulfur</keyword>
<keyword id="KW-0479">Metal-binding</keyword>
<keyword id="KW-0949">S-adenosyl-L-methionine</keyword>
<keyword id="KW-0808">Transferase</keyword>
<accession>B6IZL4</accession>
<evidence type="ECO:0000255" key="1">
    <source>
        <dbReference type="HAMAP-Rule" id="MF_00206"/>
    </source>
</evidence>
<evidence type="ECO:0000255" key="2">
    <source>
        <dbReference type="PROSITE-ProRule" id="PRU01266"/>
    </source>
</evidence>